<protein>
    <recommendedName>
        <fullName evidence="1">Membrane protein</fullName>
        <shortName evidence="1">M protein</shortName>
    </recommendedName>
    <alternativeName>
        <fullName evidence="1">E1 glycoprotein</fullName>
    </alternativeName>
    <alternativeName>
        <fullName evidence="1">Matrix glycoprotein</fullName>
    </alternativeName>
    <alternativeName>
        <fullName evidence="1">Membrane glycoprotein</fullName>
    </alternativeName>
</protein>
<keyword id="KW-0903">Direct protein sequencing</keyword>
<keyword id="KW-0325">Glycoprotein</keyword>
<keyword id="KW-1040">Host Golgi apparatus</keyword>
<keyword id="KW-1043">Host membrane</keyword>
<keyword id="KW-0472">Membrane</keyword>
<keyword id="KW-0812">Transmembrane</keyword>
<keyword id="KW-1133">Transmembrane helix</keyword>
<keyword id="KW-0261">Viral envelope protein</keyword>
<keyword id="KW-0468">Viral matrix protein</keyword>
<keyword id="KW-0946">Virion</keyword>
<feature type="chain" id="PRO_0000106049" description="Membrane protein">
    <location>
        <begin position="1"/>
        <end position="225"/>
    </location>
</feature>
<feature type="topological domain" description="Virion surface" evidence="1">
    <location>
        <begin position="1"/>
        <end position="20"/>
    </location>
</feature>
<feature type="transmembrane region" description="Helical" evidence="1">
    <location>
        <begin position="21"/>
        <end position="41"/>
    </location>
</feature>
<feature type="topological domain" description="Intravirion" evidence="1">
    <location>
        <begin position="42"/>
        <end position="51"/>
    </location>
</feature>
<feature type="transmembrane region" description="Helical" evidence="1">
    <location>
        <begin position="52"/>
        <end position="72"/>
    </location>
</feature>
<feature type="topological domain" description="Virion surface" evidence="1">
    <location>
        <begin position="73"/>
        <end position="77"/>
    </location>
</feature>
<feature type="transmembrane region" description="Helical" evidence="1">
    <location>
        <begin position="78"/>
        <end position="98"/>
    </location>
</feature>
<feature type="topological domain" description="Intravirion" evidence="1">
    <location>
        <begin position="99"/>
        <end position="225"/>
    </location>
</feature>
<feature type="glycosylation site" description="N-linked (GlcNAc...) asparagine; by host">
    <location>
        <position position="3"/>
    </location>
</feature>
<feature type="glycosylation site" description="N-linked (GlcNAc...) asparagine; by host">
    <location>
        <position position="6"/>
    </location>
</feature>
<comment type="function">
    <text evidence="1 2">Component of the viral envelope that plays a central role in virus morphogenesis and assembly via its interactions with other viral proteins.</text>
</comment>
<comment type="subunit">
    <text evidence="1 2">Homomultimer. Interacts with envelope E protein in the budding compartment of the host cell, which is located between endoplasmic reticulum and the Golgi complex. Forms a complex with HE and S proteins. Interacts with nucleocapsid N protein. This interaction probably participates in RNA packaging into the virus.</text>
</comment>
<comment type="subcellular location">
    <subcellularLocation>
        <location evidence="1">Virion membrane</location>
        <topology evidence="1">Multi-pass membrane protein</topology>
    </subcellularLocation>
    <subcellularLocation>
        <location evidence="1">Host Golgi apparatus membrane</location>
        <topology evidence="1">Multi-pass membrane protein</topology>
    </subcellularLocation>
    <text evidence="1">Largely embedded in the lipid bilayer.</text>
</comment>
<comment type="similarity">
    <text evidence="1">Belongs to the gammacoronaviruses M protein family.</text>
</comment>
<gene>
    <name evidence="1" type="primary">M</name>
</gene>
<accession>P11222</accession>
<organismHost>
    <name type="scientific">Gallus gallus</name>
    <name type="common">Chicken</name>
    <dbReference type="NCBI Taxonomy" id="9031"/>
</organismHost>
<evidence type="ECO:0000255" key="1">
    <source>
        <dbReference type="HAMAP-Rule" id="MF_04203"/>
    </source>
</evidence>
<evidence type="ECO:0000255" key="2">
    <source>
        <dbReference type="PROSITE-ProRule" id="PRU01275"/>
    </source>
</evidence>
<proteinExistence type="evidence at protein level"/>
<name>VME1_IBVB2</name>
<organism>
    <name type="scientific">Avian infectious bronchitis virus (strain Beaudette M42)</name>
    <name type="common">IBV</name>
    <dbReference type="NCBI Taxonomy" id="11123"/>
    <lineage>
        <taxon>Viruses</taxon>
        <taxon>Riboviria</taxon>
        <taxon>Orthornavirae</taxon>
        <taxon>Pisuviricota</taxon>
        <taxon>Pisoniviricetes</taxon>
        <taxon>Nidovirales</taxon>
        <taxon>Cornidovirineae</taxon>
        <taxon>Coronaviridae</taxon>
        <taxon>Orthocoronavirinae</taxon>
        <taxon>Gammacoronavirus</taxon>
        <taxon>Igacovirus</taxon>
        <taxon>Avian coronavirus</taxon>
    </lineage>
</organism>
<reference key="1">
    <citation type="journal article" date="1987" name="J. Cell Biol.">
        <title>A specific transmembrane domain of a coronavirus E1 glycoprotein is required for its retention in the Golgi region.</title>
        <authorList>
            <person name="Machamer C.E."/>
            <person name="Rose J.K."/>
        </authorList>
    </citation>
    <scope>PROTEIN SEQUENCE</scope>
</reference>
<sequence length="225" mass="25478">MSNETNCTLDFEQSVQLFKEYNLFITAFLLFLTIILQYGYATRSKVIYTLKMIVLWCFWPLNIAVGVISCIYPPNTGGLVAAIILTVFACLSFVGYWIQSIRLFKRCRSWWSFNPESNAVGSILLTNGQQCNFAIESVPMVLSPIIKNGVLYCEGQWLAKCEPDHLPKDIFVCTPDRRNIYRMVQKYTGDQSGNKKRFATFVYAKQSVDTGELESVATGGSSLYT</sequence>
<dbReference type="PIR" id="A27080">
    <property type="entry name" value="MMIHIB"/>
</dbReference>
<dbReference type="SMR" id="P11222"/>
<dbReference type="GlyCosmos" id="P11222">
    <property type="glycosylation" value="2 sites, No reported glycans"/>
</dbReference>
<dbReference type="GO" id="GO:0044178">
    <property type="term" value="C:host cell Golgi membrane"/>
    <property type="evidence" value="ECO:0007669"/>
    <property type="project" value="UniProtKB-SubCell"/>
</dbReference>
<dbReference type="GO" id="GO:0016020">
    <property type="term" value="C:membrane"/>
    <property type="evidence" value="ECO:0007669"/>
    <property type="project" value="UniProtKB-UniRule"/>
</dbReference>
<dbReference type="GO" id="GO:0019031">
    <property type="term" value="C:viral envelope"/>
    <property type="evidence" value="ECO:0007669"/>
    <property type="project" value="UniProtKB-UniRule"/>
</dbReference>
<dbReference type="GO" id="GO:0055036">
    <property type="term" value="C:virion membrane"/>
    <property type="evidence" value="ECO:0007669"/>
    <property type="project" value="UniProtKB-SubCell"/>
</dbReference>
<dbReference type="GO" id="GO:0039660">
    <property type="term" value="F:structural constituent of virion"/>
    <property type="evidence" value="ECO:0007669"/>
    <property type="project" value="UniProtKB-UniRule"/>
</dbReference>
<dbReference type="CDD" id="cd21566">
    <property type="entry name" value="gammaCoV_M"/>
    <property type="match status" value="1"/>
</dbReference>
<dbReference type="HAMAP" id="MF_04203">
    <property type="entry name" value="GAMMA_CORONA_M"/>
    <property type="match status" value="1"/>
</dbReference>
<dbReference type="InterPro" id="IPR042550">
    <property type="entry name" value="GAMMA_CORONA_M"/>
</dbReference>
<dbReference type="InterPro" id="IPR002574">
    <property type="entry name" value="M_CoV"/>
</dbReference>
<dbReference type="Pfam" id="PF01635">
    <property type="entry name" value="CoV_M"/>
    <property type="match status" value="1"/>
</dbReference>
<dbReference type="PROSITE" id="PS51927">
    <property type="entry name" value="COV_M"/>
    <property type="match status" value="1"/>
</dbReference>